<feature type="signal peptide" evidence="4">
    <location>
        <begin position="1"/>
        <end position="23"/>
    </location>
</feature>
<feature type="chain" id="PRO_0000002947" description="Laccase-5">
    <location>
        <begin position="24"/>
        <end position="527"/>
    </location>
</feature>
<feature type="domain" description="Plastocyanin-like 1">
    <location>
        <begin position="25"/>
        <end position="150"/>
    </location>
</feature>
<feature type="domain" description="Plastocyanin-like 2">
    <location>
        <begin position="162"/>
        <end position="306"/>
    </location>
</feature>
<feature type="domain" description="Plastocyanin-like 3">
    <location>
        <begin position="373"/>
        <end position="498"/>
    </location>
</feature>
<feature type="binding site" description="type 2 copper site" evidence="1">
    <location>
        <position position="87"/>
    </location>
    <ligand>
        <name>Cu cation</name>
        <dbReference type="ChEBI" id="CHEBI:23378"/>
        <label>1</label>
    </ligand>
</feature>
<feature type="binding site" description="type 3 copper site" evidence="1">
    <location>
        <position position="89"/>
    </location>
    <ligand>
        <name>Cu cation</name>
        <dbReference type="ChEBI" id="CHEBI:23378"/>
        <label>2</label>
    </ligand>
</feature>
<feature type="binding site" description="type 3 copper site" evidence="1">
    <location>
        <position position="132"/>
    </location>
    <ligand>
        <name>Cu cation</name>
        <dbReference type="ChEBI" id="CHEBI:23378"/>
        <label>2</label>
    </ligand>
</feature>
<feature type="binding site" description="type 3 copper site" evidence="1">
    <location>
        <position position="134"/>
    </location>
    <ligand>
        <name>Cu cation</name>
        <dbReference type="ChEBI" id="CHEBI:23378"/>
        <label>3</label>
    </ligand>
</feature>
<feature type="binding site" description="type 1 copper site" evidence="1">
    <location>
        <position position="425"/>
    </location>
    <ligand>
        <name>Cu cation</name>
        <dbReference type="ChEBI" id="CHEBI:23378"/>
        <label>4</label>
    </ligand>
</feature>
<feature type="binding site" description="type 2 copper site" evidence="1">
    <location>
        <position position="428"/>
    </location>
    <ligand>
        <name>Cu cation</name>
        <dbReference type="ChEBI" id="CHEBI:23378"/>
        <label>1</label>
    </ligand>
</feature>
<feature type="binding site" description="type 3 copper site" evidence="1">
    <location>
        <position position="430"/>
    </location>
    <ligand>
        <name>Cu cation</name>
        <dbReference type="ChEBI" id="CHEBI:23378"/>
        <label>3</label>
    </ligand>
</feature>
<feature type="binding site" description="type 3 copper site" evidence="1">
    <location>
        <position position="480"/>
    </location>
    <ligand>
        <name>Cu cation</name>
        <dbReference type="ChEBI" id="CHEBI:23378"/>
        <label>3</label>
    </ligand>
</feature>
<feature type="binding site" description="type 1 copper site" evidence="1">
    <location>
        <position position="481"/>
    </location>
    <ligand>
        <name>Cu cation</name>
        <dbReference type="ChEBI" id="CHEBI:23378"/>
        <label>4</label>
    </ligand>
</feature>
<feature type="binding site" description="type 3 copper site" evidence="1">
    <location>
        <position position="482"/>
    </location>
    <ligand>
        <name>Cu cation</name>
        <dbReference type="ChEBI" id="CHEBI:23378"/>
        <label>2</label>
    </ligand>
</feature>
<feature type="binding site" description="type 1 copper site" evidence="1">
    <location>
        <position position="486"/>
    </location>
    <ligand>
        <name>Cu cation</name>
        <dbReference type="ChEBI" id="CHEBI:23378"/>
        <label>4</label>
    </ligand>
</feature>
<feature type="glycosylation site" description="N-linked (GlcNAc...) asparagine" evidence="4">
    <location>
        <position position="74"/>
    </location>
</feature>
<feature type="glycosylation site" description="N-linked (GlcNAc...) asparagine" evidence="4">
    <location>
        <position position="77"/>
    </location>
</feature>
<feature type="glycosylation site" description="N-linked (GlcNAc...) asparagine" evidence="4">
    <location>
        <position position="156"/>
    </location>
</feature>
<feature type="glycosylation site" description="N-linked (GlcNAc...) asparagine" evidence="4">
    <location>
        <position position="209"/>
    </location>
</feature>
<feature type="glycosylation site" description="N-linked (GlcNAc...) asparagine" evidence="4">
    <location>
        <position position="233"/>
    </location>
</feature>
<feature type="glycosylation site" description="N-linked (GlcNAc...) asparagine" evidence="4">
    <location>
        <position position="242"/>
    </location>
</feature>
<feature type="glycosylation site" description="N-linked (GlcNAc...) asparagine" evidence="4">
    <location>
        <position position="276"/>
    </location>
</feature>
<feature type="glycosylation site" description="N-linked (GlcNAc...) asparagine" evidence="4">
    <location>
        <position position="317"/>
    </location>
</feature>
<feature type="glycosylation site" description="N-linked (GlcNAc...) asparagine" evidence="4">
    <location>
        <position position="358"/>
    </location>
</feature>
<feature type="glycosylation site" description="N-linked (GlcNAc...) asparagine" evidence="4">
    <location>
        <position position="366"/>
    </location>
</feature>
<feature type="glycosylation site" description="N-linked (GlcNAc...) asparagine" evidence="4">
    <location>
        <position position="393"/>
    </location>
</feature>
<feature type="glycosylation site" description="N-linked (GlcNAc...) asparagine" evidence="4">
    <location>
        <position position="402"/>
    </location>
</feature>
<feature type="disulfide bond" evidence="2">
    <location>
        <begin position="108"/>
        <end position="516"/>
    </location>
</feature>
<feature type="disulfide bond" evidence="1">
    <location>
        <begin position="140"/>
        <end position="230"/>
    </location>
</feature>
<name>LAC5_TRAVI</name>
<accession>Q99056</accession>
<keyword id="KW-0186">Copper</keyword>
<keyword id="KW-1015">Disulfide bond</keyword>
<keyword id="KW-0325">Glycoprotein</keyword>
<keyword id="KW-0439">Lignin degradation</keyword>
<keyword id="KW-0479">Metal-binding</keyword>
<keyword id="KW-0560">Oxidoreductase</keyword>
<keyword id="KW-0677">Repeat</keyword>
<keyword id="KW-0964">Secreted</keyword>
<keyword id="KW-0732">Signal</keyword>
<reference key="1">
    <citation type="journal article" date="1996" name="Gene">
        <title>Cloning and characterization of three laccase genes from the white-rot basidiomycete Trametes villosa: genomic organization of the laccase gene family.</title>
        <authorList>
            <person name="Yaver D.S."/>
            <person name="Golightly E.J."/>
        </authorList>
    </citation>
    <scope>NUCLEOTIDE SEQUENCE [GENOMIC DNA]</scope>
</reference>
<reference key="2">
    <citation type="submission" date="2001-01" db="EMBL/GenBank/DDBJ databases">
        <authorList>
            <person name="Yaver D.S."/>
            <person name="Golightly E.J."/>
        </authorList>
    </citation>
    <scope>SEQUENCE REVISION</scope>
</reference>
<organism>
    <name type="scientific">Trametes villosa</name>
    <name type="common">White-rot fungus</name>
    <dbReference type="NCBI Taxonomy" id="47662"/>
    <lineage>
        <taxon>Eukaryota</taxon>
        <taxon>Fungi</taxon>
        <taxon>Dikarya</taxon>
        <taxon>Basidiomycota</taxon>
        <taxon>Agaricomycotina</taxon>
        <taxon>Agaricomycetes</taxon>
        <taxon>Polyporales</taxon>
        <taxon>Polyporaceae</taxon>
        <taxon>Trametes</taxon>
    </lineage>
</organism>
<dbReference type="EC" id="1.10.3.2" evidence="2"/>
<dbReference type="EMBL" id="L78078">
    <property type="protein sequence ID" value="AAB47735.2"/>
    <property type="molecule type" value="Genomic_DNA"/>
</dbReference>
<dbReference type="PIR" id="JC5357">
    <property type="entry name" value="JC5357"/>
</dbReference>
<dbReference type="SMR" id="Q99056"/>
<dbReference type="CAZy" id="AA1">
    <property type="family name" value="Auxiliary Activities 1"/>
</dbReference>
<dbReference type="GlyCosmos" id="Q99056">
    <property type="glycosylation" value="12 sites, No reported glycans"/>
</dbReference>
<dbReference type="GO" id="GO:0005576">
    <property type="term" value="C:extracellular region"/>
    <property type="evidence" value="ECO:0007669"/>
    <property type="project" value="UniProtKB-SubCell"/>
</dbReference>
<dbReference type="GO" id="GO:0005507">
    <property type="term" value="F:copper ion binding"/>
    <property type="evidence" value="ECO:0007669"/>
    <property type="project" value="InterPro"/>
</dbReference>
<dbReference type="GO" id="GO:0052716">
    <property type="term" value="F:hydroquinone:oxygen oxidoreductase activity"/>
    <property type="evidence" value="ECO:0007669"/>
    <property type="project" value="UniProtKB-EC"/>
</dbReference>
<dbReference type="GO" id="GO:0046274">
    <property type="term" value="P:lignin catabolic process"/>
    <property type="evidence" value="ECO:0007669"/>
    <property type="project" value="UniProtKB-KW"/>
</dbReference>
<dbReference type="CDD" id="cd13856">
    <property type="entry name" value="CuRO_1_Tv-LCC_like"/>
    <property type="match status" value="1"/>
</dbReference>
<dbReference type="CDD" id="cd13903">
    <property type="entry name" value="CuRO_3_Tv-LCC_like"/>
    <property type="match status" value="1"/>
</dbReference>
<dbReference type="FunFam" id="2.60.40.420:FF:000045">
    <property type="entry name" value="Laccase 2"/>
    <property type="match status" value="1"/>
</dbReference>
<dbReference type="FunFam" id="2.60.40.420:FF:000125">
    <property type="entry name" value="Laccase 2"/>
    <property type="match status" value="1"/>
</dbReference>
<dbReference type="FunFam" id="2.60.40.420:FF:000112">
    <property type="entry name" value="Laccase B"/>
    <property type="match status" value="1"/>
</dbReference>
<dbReference type="Gene3D" id="2.60.40.420">
    <property type="entry name" value="Cupredoxins - blue copper proteins"/>
    <property type="match status" value="3"/>
</dbReference>
<dbReference type="InterPro" id="IPR011707">
    <property type="entry name" value="Cu-oxidase-like_N"/>
</dbReference>
<dbReference type="InterPro" id="IPR001117">
    <property type="entry name" value="Cu-oxidase_2nd"/>
</dbReference>
<dbReference type="InterPro" id="IPR011706">
    <property type="entry name" value="Cu-oxidase_C"/>
</dbReference>
<dbReference type="InterPro" id="IPR045087">
    <property type="entry name" value="Cu-oxidase_fam"/>
</dbReference>
<dbReference type="InterPro" id="IPR033138">
    <property type="entry name" value="Cu_oxidase_CS"/>
</dbReference>
<dbReference type="InterPro" id="IPR008972">
    <property type="entry name" value="Cupredoxin"/>
</dbReference>
<dbReference type="PANTHER" id="PTHR11709:SF511">
    <property type="entry name" value="LACCASE"/>
    <property type="match status" value="1"/>
</dbReference>
<dbReference type="PANTHER" id="PTHR11709">
    <property type="entry name" value="MULTI-COPPER OXIDASE"/>
    <property type="match status" value="1"/>
</dbReference>
<dbReference type="Pfam" id="PF00394">
    <property type="entry name" value="Cu-oxidase"/>
    <property type="match status" value="1"/>
</dbReference>
<dbReference type="Pfam" id="PF07731">
    <property type="entry name" value="Cu-oxidase_2"/>
    <property type="match status" value="1"/>
</dbReference>
<dbReference type="Pfam" id="PF07732">
    <property type="entry name" value="Cu-oxidase_3"/>
    <property type="match status" value="1"/>
</dbReference>
<dbReference type="SUPFAM" id="SSF49503">
    <property type="entry name" value="Cupredoxins"/>
    <property type="match status" value="3"/>
</dbReference>
<dbReference type="PROSITE" id="PS00079">
    <property type="entry name" value="MULTICOPPER_OXIDASE1"/>
    <property type="match status" value="1"/>
</dbReference>
<gene>
    <name type="primary">LCC5</name>
</gene>
<proteinExistence type="inferred from homology"/>
<comment type="function">
    <text evidence="2">Lignin degradation and detoxification of lignin-derived products.</text>
</comment>
<comment type="catalytic activity">
    <reaction evidence="2">
        <text>4 hydroquinone + O2 = 4 benzosemiquinone + 2 H2O</text>
        <dbReference type="Rhea" id="RHEA:11276"/>
        <dbReference type="ChEBI" id="CHEBI:15377"/>
        <dbReference type="ChEBI" id="CHEBI:15379"/>
        <dbReference type="ChEBI" id="CHEBI:17594"/>
        <dbReference type="ChEBI" id="CHEBI:17977"/>
        <dbReference type="EC" id="1.10.3.2"/>
    </reaction>
</comment>
<comment type="cofactor">
    <cofactor evidence="2">
        <name>Cu cation</name>
        <dbReference type="ChEBI" id="CHEBI:23378"/>
    </cofactor>
    <text evidence="2">Binds 4 Cu cations per monomer.</text>
</comment>
<comment type="subunit">
    <text evidence="3">Homodimer.</text>
</comment>
<comment type="subcellular location">
    <subcellularLocation>
        <location evidence="2">Secreted</location>
    </subcellularLocation>
</comment>
<comment type="similarity">
    <text evidence="5">Belongs to the multicopper oxidase family.</text>
</comment>
<protein>
    <recommendedName>
        <fullName>Laccase-5</fullName>
        <ecNumber evidence="2">1.10.3.2</ecNumber>
    </recommendedName>
    <alternativeName>
        <fullName>Benzenediol:oxygen oxidoreductase 5</fullName>
    </alternativeName>
    <alternativeName>
        <fullName>Diphenol oxidase 5</fullName>
    </alternativeName>
    <alternativeName>
        <fullName>Urishiol oxidase 5</fullName>
    </alternativeName>
</protein>
<sequence length="527" mass="56247">MGKYHSFVNVVALSLSLSGRVFGAIGPVTDLTISNADVTPDGITRAAVLAGGVFPGPLITGNKGDEFQINVIDNLTNETMLKSTTIHWHGIFQAGTNWADGAAFVNQCPIATGNSFLYDFTVPDQAGTFWYHSHLSTQYCDGLRGPLVVYDPDDPNASLYDVDDDTTVITLADWYHTAAKLGPAFPAGPDSVLINGLGRFSGDGGGATNLTVITVTQGKRYRFRLVSISCDPNFTFSIDGHNMTIIEVDGVNHEALDVDSIQIFAGQRYSFILNANQSIDNYWIRAIPNTGTTDTTGGVNSAILRYDTAEDIEPTTNATTSVIPLTETDLVPLDNPAAPGDPQVGGVDLAMSLDFSFNGSNFFINNETFVPPTVPVLLQILSGAQDAASLLPNGSVYTLPSNSTIEISFPIITTDGVLNAPGAPHPFHLHGHTFSVVRSAGSSTFNYANPVRRDTVSTGNSGDNVTIRFTTDNPGPWFLHCHIDFHLEAGFAIVWGEDTADTASANPVPTAWSDLCPTYDALDSSDL</sequence>
<evidence type="ECO:0000250" key="1">
    <source>
        <dbReference type="UniProtKB" id="D0VWU3"/>
    </source>
</evidence>
<evidence type="ECO:0000250" key="2">
    <source>
        <dbReference type="UniProtKB" id="Q70KY3"/>
    </source>
</evidence>
<evidence type="ECO:0000250" key="3">
    <source>
        <dbReference type="UniProtKB" id="Q99044"/>
    </source>
</evidence>
<evidence type="ECO:0000255" key="4"/>
<evidence type="ECO:0000305" key="5"/>